<dbReference type="EMBL" id="BC104680">
    <property type="protein sequence ID" value="AAI04681.1"/>
    <property type="molecule type" value="mRNA"/>
</dbReference>
<dbReference type="RefSeq" id="NP_001030114.1">
    <property type="nucleotide sequence ID" value="NM_001034942.3"/>
</dbReference>
<dbReference type="SMR" id="Q3SWU4"/>
<dbReference type="FunCoup" id="Q3SWU4">
    <property type="interactions" value="1992"/>
</dbReference>
<dbReference type="STRING" id="10116.ENSRNOP00000007539"/>
<dbReference type="iPTMnet" id="Q3SWU4"/>
<dbReference type="PhosphoSitePlus" id="Q3SWU4"/>
<dbReference type="PaxDb" id="10116-ENSRNOP00000007539"/>
<dbReference type="GeneID" id="363035"/>
<dbReference type="KEGG" id="rno:363035"/>
<dbReference type="UCSC" id="RGD:1308984">
    <property type="organism name" value="rat"/>
</dbReference>
<dbReference type="AGR" id="RGD:1308984"/>
<dbReference type="CTD" id="29068"/>
<dbReference type="RGD" id="1308984">
    <property type="gene designation" value="Zbtb44"/>
</dbReference>
<dbReference type="VEuPathDB" id="HostDB:ENSRNOG00000005578"/>
<dbReference type="eggNOG" id="KOG1721">
    <property type="taxonomic scope" value="Eukaryota"/>
</dbReference>
<dbReference type="HOGENOM" id="CLU_034849_1_0_1"/>
<dbReference type="InParanoid" id="Q3SWU4"/>
<dbReference type="OrthoDB" id="8117402at2759"/>
<dbReference type="PhylomeDB" id="Q3SWU4"/>
<dbReference type="TreeFam" id="TF332673"/>
<dbReference type="PRO" id="PR:Q3SWU4"/>
<dbReference type="Proteomes" id="UP000002494">
    <property type="component" value="Chromosome 8"/>
</dbReference>
<dbReference type="Bgee" id="ENSRNOG00000005578">
    <property type="expression patterns" value="Expressed in liver and 18 other cell types or tissues"/>
</dbReference>
<dbReference type="ExpressionAtlas" id="Q3SWU4">
    <property type="expression patterns" value="baseline and differential"/>
</dbReference>
<dbReference type="GO" id="GO:0005634">
    <property type="term" value="C:nucleus"/>
    <property type="evidence" value="ECO:0007669"/>
    <property type="project" value="UniProtKB-SubCell"/>
</dbReference>
<dbReference type="GO" id="GO:0003677">
    <property type="term" value="F:DNA binding"/>
    <property type="evidence" value="ECO:0007669"/>
    <property type="project" value="UniProtKB-KW"/>
</dbReference>
<dbReference type="GO" id="GO:0008270">
    <property type="term" value="F:zinc ion binding"/>
    <property type="evidence" value="ECO:0007669"/>
    <property type="project" value="UniProtKB-KW"/>
</dbReference>
<dbReference type="CDD" id="cd18228">
    <property type="entry name" value="BTB_POZ_ZBTB44"/>
    <property type="match status" value="1"/>
</dbReference>
<dbReference type="FunFam" id="3.30.160.60:FF:000266">
    <property type="entry name" value="zinc finger and BTB domain-containing protein 44 isoform X1"/>
    <property type="match status" value="1"/>
</dbReference>
<dbReference type="FunFam" id="3.30.160.60:FF:000278">
    <property type="entry name" value="zinc finger and BTB domain-containing protein 44 isoform X1"/>
    <property type="match status" value="1"/>
</dbReference>
<dbReference type="Gene3D" id="3.30.160.60">
    <property type="entry name" value="Classic Zinc Finger"/>
    <property type="match status" value="2"/>
</dbReference>
<dbReference type="Gene3D" id="3.30.710.10">
    <property type="entry name" value="Potassium Channel Kv1.1, Chain A"/>
    <property type="match status" value="1"/>
</dbReference>
<dbReference type="InterPro" id="IPR000210">
    <property type="entry name" value="BTB/POZ_dom"/>
</dbReference>
<dbReference type="InterPro" id="IPR011333">
    <property type="entry name" value="SKP1/BTB/POZ_sf"/>
</dbReference>
<dbReference type="InterPro" id="IPR036236">
    <property type="entry name" value="Znf_C2H2_sf"/>
</dbReference>
<dbReference type="InterPro" id="IPR013087">
    <property type="entry name" value="Znf_C2H2_type"/>
</dbReference>
<dbReference type="InterPro" id="IPR050457">
    <property type="entry name" value="ZnFinger_BTB_dom_contain"/>
</dbReference>
<dbReference type="PANTHER" id="PTHR46105">
    <property type="entry name" value="AGAP004733-PA"/>
    <property type="match status" value="1"/>
</dbReference>
<dbReference type="PANTHER" id="PTHR46105:SF5">
    <property type="entry name" value="ZINC FINGER AND BTB DOMAIN-CONTAINING PROTEIN 44 ISOFORM X1"/>
    <property type="match status" value="1"/>
</dbReference>
<dbReference type="Pfam" id="PF00651">
    <property type="entry name" value="BTB"/>
    <property type="match status" value="1"/>
</dbReference>
<dbReference type="Pfam" id="PF00096">
    <property type="entry name" value="zf-C2H2"/>
    <property type="match status" value="2"/>
</dbReference>
<dbReference type="SMART" id="SM00225">
    <property type="entry name" value="BTB"/>
    <property type="match status" value="1"/>
</dbReference>
<dbReference type="SMART" id="SM00355">
    <property type="entry name" value="ZnF_C2H2"/>
    <property type="match status" value="2"/>
</dbReference>
<dbReference type="SUPFAM" id="SSF57667">
    <property type="entry name" value="beta-beta-alpha zinc fingers"/>
    <property type="match status" value="1"/>
</dbReference>
<dbReference type="SUPFAM" id="SSF54695">
    <property type="entry name" value="POZ domain"/>
    <property type="match status" value="1"/>
</dbReference>
<dbReference type="PROSITE" id="PS50097">
    <property type="entry name" value="BTB"/>
    <property type="match status" value="1"/>
</dbReference>
<dbReference type="PROSITE" id="PS00028">
    <property type="entry name" value="ZINC_FINGER_C2H2_1"/>
    <property type="match status" value="2"/>
</dbReference>
<dbReference type="PROSITE" id="PS50157">
    <property type="entry name" value="ZINC_FINGER_C2H2_2"/>
    <property type="match status" value="2"/>
</dbReference>
<accession>Q3SWU4</accession>
<organism>
    <name type="scientific">Rattus norvegicus</name>
    <name type="common">Rat</name>
    <dbReference type="NCBI Taxonomy" id="10116"/>
    <lineage>
        <taxon>Eukaryota</taxon>
        <taxon>Metazoa</taxon>
        <taxon>Chordata</taxon>
        <taxon>Craniata</taxon>
        <taxon>Vertebrata</taxon>
        <taxon>Euteleostomi</taxon>
        <taxon>Mammalia</taxon>
        <taxon>Eutheria</taxon>
        <taxon>Euarchontoglires</taxon>
        <taxon>Glires</taxon>
        <taxon>Rodentia</taxon>
        <taxon>Myomorpha</taxon>
        <taxon>Muroidea</taxon>
        <taxon>Muridae</taxon>
        <taxon>Murinae</taxon>
        <taxon>Rattus</taxon>
    </lineage>
</organism>
<reference key="1">
    <citation type="journal article" date="2004" name="Genome Res.">
        <title>The status, quality, and expansion of the NIH full-length cDNA project: the Mammalian Gene Collection (MGC).</title>
        <authorList>
            <consortium name="The MGC Project Team"/>
        </authorList>
    </citation>
    <scope>NUCLEOTIDE SEQUENCE [LARGE SCALE MRNA]</scope>
    <source>
        <tissue>Testis</tissue>
    </source>
</reference>
<reference key="2">
    <citation type="journal article" date="2012" name="Nat. Commun.">
        <title>Quantitative maps of protein phosphorylation sites across 14 different rat organs and tissues.</title>
        <authorList>
            <person name="Lundby A."/>
            <person name="Secher A."/>
            <person name="Lage K."/>
            <person name="Nordsborg N.B."/>
            <person name="Dmytriyev A."/>
            <person name="Lundby C."/>
            <person name="Olsen J.V."/>
        </authorList>
    </citation>
    <scope>PHOSPHORYLATION [LARGE SCALE ANALYSIS] AT SER-161; SER-191 AND SER-194</scope>
    <scope>IDENTIFICATION BY MASS SPECTROMETRY [LARGE SCALE ANALYSIS]</scope>
</reference>
<proteinExistence type="evidence at protein level"/>
<protein>
    <recommendedName>
        <fullName>Zinc finger and BTB domain-containing protein 44</fullName>
    </recommendedName>
    <alternativeName>
        <fullName>BTB/POZ domain-containing protein 15</fullName>
    </alternativeName>
</protein>
<comment type="subcellular location">
    <subcellularLocation>
        <location evidence="1">Nucleus</location>
    </subcellularLocation>
</comment>
<sequence>MGVKTFTHSSSSHSQEMLGKLNMLRNDGHFCDITIRVQDRIFRAHKVVLAACSDFFRTKLVGQTEDENKNVLDLHHVTVTGFIPLLEYAYTATLSINTENIIDVLAAASYMQMFSVASTCSEFMKSSILWNTPNSQPEKGLDAGQENSSNCNFTSRDGSISPVSSECSAVERTIPVCRESRRKRKSYIVMSPESPVKCSTQTNSPQVLNSSASYAENRNQPVDSSLAFPWTFPFGIDRRIQPEKAKQAENTRTLELPGPSEAGRRMADYVTCESTKTTLPLGTEEDVRVKVERLSDEEVHEEVSQPVSASQSSLSDQQTVPGSEPVQEDLLISPQSSSIGSVDEGVTEGLPTLQSTSSTNAHADEDDRLENVQYPYQLYIAPSTSSTERPSPNGPDRPFQCPTCGVRFTRIQNLKQHMLIHSGIKPFQCDCCGKKFTRAYSLKMHRLKHEVIS</sequence>
<keyword id="KW-0238">DNA-binding</keyword>
<keyword id="KW-1017">Isopeptide bond</keyword>
<keyword id="KW-0479">Metal-binding</keyword>
<keyword id="KW-0539">Nucleus</keyword>
<keyword id="KW-0597">Phosphoprotein</keyword>
<keyword id="KW-1185">Reference proteome</keyword>
<keyword id="KW-0677">Repeat</keyword>
<keyword id="KW-0804">Transcription</keyword>
<keyword id="KW-0805">Transcription regulation</keyword>
<keyword id="KW-0832">Ubl conjugation</keyword>
<keyword id="KW-0862">Zinc</keyword>
<keyword id="KW-0863">Zinc-finger</keyword>
<name>ZBT44_RAT</name>
<feature type="chain" id="PRO_0000274610" description="Zinc finger and BTB domain-containing protein 44">
    <location>
        <begin position="1"/>
        <end position="453"/>
    </location>
</feature>
<feature type="domain" description="BTB" evidence="4">
    <location>
        <begin position="31"/>
        <end position="98"/>
    </location>
</feature>
<feature type="zinc finger region" description="C2H2-type 1" evidence="5">
    <location>
        <begin position="399"/>
        <end position="421"/>
    </location>
</feature>
<feature type="zinc finger region" description="C2H2-type 2" evidence="5">
    <location>
        <begin position="427"/>
        <end position="449"/>
    </location>
</feature>
<feature type="region of interest" description="Disordered" evidence="6">
    <location>
        <begin position="241"/>
        <end position="265"/>
    </location>
</feature>
<feature type="region of interest" description="Disordered" evidence="6">
    <location>
        <begin position="295"/>
        <end position="324"/>
    </location>
</feature>
<feature type="region of interest" description="Disordered" evidence="6">
    <location>
        <begin position="336"/>
        <end position="368"/>
    </location>
</feature>
<feature type="compositionally biased region" description="Low complexity" evidence="6">
    <location>
        <begin position="304"/>
        <end position="318"/>
    </location>
</feature>
<feature type="compositionally biased region" description="Polar residues" evidence="6">
    <location>
        <begin position="352"/>
        <end position="361"/>
    </location>
</feature>
<feature type="modified residue" description="Phosphoserine" evidence="2">
    <location>
        <position position="135"/>
    </location>
</feature>
<feature type="modified residue" description="Phosphoserine" evidence="3">
    <location>
        <position position="159"/>
    </location>
</feature>
<feature type="modified residue" description="Phosphoserine" evidence="7">
    <location>
        <position position="161"/>
    </location>
</feature>
<feature type="modified residue" description="Phosphoserine" evidence="3">
    <location>
        <position position="165"/>
    </location>
</feature>
<feature type="modified residue" description="Phosphoserine" evidence="7">
    <location>
        <position position="191"/>
    </location>
</feature>
<feature type="modified residue" description="Phosphoserine" evidence="7">
    <location>
        <position position="194"/>
    </location>
</feature>
<feature type="modified residue" description="Phosphoserine" evidence="3">
    <location>
        <position position="199"/>
    </location>
</feature>
<feature type="modified residue" description="Phosphothreonine" evidence="3">
    <location>
        <position position="200"/>
    </location>
</feature>
<feature type="cross-link" description="Glycyl lysine isopeptide (Lys-Gly) (interchain with G-Cter in SUMO2)" evidence="2">
    <location>
        <position position="4"/>
    </location>
</feature>
<feature type="cross-link" description="Glycyl lysine isopeptide (Lys-Gly) (interchain with G-Cter in SUMO2)" evidence="2">
    <location>
        <position position="290"/>
    </location>
</feature>
<evidence type="ECO:0000250" key="1"/>
<evidence type="ECO:0000250" key="2">
    <source>
        <dbReference type="UniProtKB" id="Q8NCP5"/>
    </source>
</evidence>
<evidence type="ECO:0000250" key="3">
    <source>
        <dbReference type="UniProtKB" id="Q8R0A2"/>
    </source>
</evidence>
<evidence type="ECO:0000255" key="4">
    <source>
        <dbReference type="PROSITE-ProRule" id="PRU00037"/>
    </source>
</evidence>
<evidence type="ECO:0000255" key="5">
    <source>
        <dbReference type="PROSITE-ProRule" id="PRU00042"/>
    </source>
</evidence>
<evidence type="ECO:0000256" key="6">
    <source>
        <dbReference type="SAM" id="MobiDB-lite"/>
    </source>
</evidence>
<evidence type="ECO:0007744" key="7">
    <source>
    </source>
</evidence>
<gene>
    <name type="primary">Zbtb44</name>
    <name type="synonym">Btbd15</name>
</gene>